<sequence>MSPLTQTLLMILAAYLAGSISSAVLVCRMRGLPDPRLQGSGNPGATNVLRIGGASSAAMVLFFDMLKGAVPSYLAYLMGIDAVSLGLIAIAACLGHIYPVFFGFKGGKGVATAFGAMAPIGDDLAICLMASWVVLLLISRYSSLAAILTALLAPLYTWWLDDRFTIPVAMLSTLIIIRHKDNIQRLLKGEESKVSRKKRPKKS</sequence>
<feature type="chain" id="PRO_1000149581" description="Glycerol-3-phosphate acyltransferase">
    <location>
        <begin position="1"/>
        <end position="203"/>
    </location>
</feature>
<feature type="transmembrane region" description="Helical" evidence="1">
    <location>
        <begin position="7"/>
        <end position="27"/>
    </location>
</feature>
<feature type="transmembrane region" description="Helical" evidence="1">
    <location>
        <begin position="82"/>
        <end position="102"/>
    </location>
</feature>
<feature type="transmembrane region" description="Helical" evidence="1">
    <location>
        <begin position="118"/>
        <end position="138"/>
    </location>
</feature>
<feature type="transmembrane region" description="Helical" evidence="1">
    <location>
        <begin position="141"/>
        <end position="161"/>
    </location>
</feature>
<reference key="1">
    <citation type="submission" date="2008-12" db="EMBL/GenBank/DDBJ databases">
        <title>Complete sequence of chromosome of Shewanella baltica OS223.</title>
        <authorList>
            <consortium name="US DOE Joint Genome Institute"/>
            <person name="Lucas S."/>
            <person name="Copeland A."/>
            <person name="Lapidus A."/>
            <person name="Glavina del Rio T."/>
            <person name="Dalin E."/>
            <person name="Tice H."/>
            <person name="Bruce D."/>
            <person name="Goodwin L."/>
            <person name="Pitluck S."/>
            <person name="Chertkov O."/>
            <person name="Meincke L."/>
            <person name="Brettin T."/>
            <person name="Detter J.C."/>
            <person name="Han C."/>
            <person name="Kuske C.R."/>
            <person name="Larimer F."/>
            <person name="Land M."/>
            <person name="Hauser L."/>
            <person name="Kyrpides N."/>
            <person name="Ovchinnikova G."/>
            <person name="Brettar I."/>
            <person name="Rodrigues J."/>
            <person name="Konstantinidis K."/>
            <person name="Tiedje J."/>
        </authorList>
    </citation>
    <scope>NUCLEOTIDE SEQUENCE [LARGE SCALE GENOMIC DNA]</scope>
    <source>
        <strain>OS223</strain>
    </source>
</reference>
<proteinExistence type="inferred from homology"/>
<gene>
    <name evidence="1" type="primary">plsY</name>
    <name type="ordered locus">Sbal223_3164</name>
</gene>
<protein>
    <recommendedName>
        <fullName evidence="1">Glycerol-3-phosphate acyltransferase</fullName>
    </recommendedName>
    <alternativeName>
        <fullName evidence="1">Acyl-PO4 G3P acyltransferase</fullName>
    </alternativeName>
    <alternativeName>
        <fullName evidence="1">Acyl-phosphate--glycerol-3-phosphate acyltransferase</fullName>
    </alternativeName>
    <alternativeName>
        <fullName evidence="1">G3P acyltransferase</fullName>
        <shortName evidence="1">GPAT</shortName>
        <ecNumber evidence="1">2.3.1.275</ecNumber>
    </alternativeName>
    <alternativeName>
        <fullName evidence="1">Lysophosphatidic acid synthase</fullName>
        <shortName evidence="1">LPA synthase</shortName>
    </alternativeName>
</protein>
<comment type="function">
    <text evidence="1">Catalyzes the transfer of an acyl group from acyl-phosphate (acyl-PO(4)) to glycerol-3-phosphate (G3P) to form lysophosphatidic acid (LPA). This enzyme utilizes acyl-phosphate as fatty acyl donor, but not acyl-CoA or acyl-ACP.</text>
</comment>
<comment type="catalytic activity">
    <reaction evidence="1">
        <text>an acyl phosphate + sn-glycerol 3-phosphate = a 1-acyl-sn-glycero-3-phosphate + phosphate</text>
        <dbReference type="Rhea" id="RHEA:34075"/>
        <dbReference type="ChEBI" id="CHEBI:43474"/>
        <dbReference type="ChEBI" id="CHEBI:57597"/>
        <dbReference type="ChEBI" id="CHEBI:57970"/>
        <dbReference type="ChEBI" id="CHEBI:59918"/>
        <dbReference type="EC" id="2.3.1.275"/>
    </reaction>
</comment>
<comment type="pathway">
    <text evidence="1">Lipid metabolism; phospholipid metabolism.</text>
</comment>
<comment type="subunit">
    <text evidence="1">Probably interacts with PlsX.</text>
</comment>
<comment type="subcellular location">
    <subcellularLocation>
        <location evidence="1">Cell inner membrane</location>
        <topology evidence="1">Multi-pass membrane protein</topology>
    </subcellularLocation>
</comment>
<comment type="similarity">
    <text evidence="1">Belongs to the PlsY family.</text>
</comment>
<name>PLSY_SHEB2</name>
<evidence type="ECO:0000255" key="1">
    <source>
        <dbReference type="HAMAP-Rule" id="MF_01043"/>
    </source>
</evidence>
<keyword id="KW-0997">Cell inner membrane</keyword>
<keyword id="KW-1003">Cell membrane</keyword>
<keyword id="KW-0444">Lipid biosynthesis</keyword>
<keyword id="KW-0443">Lipid metabolism</keyword>
<keyword id="KW-0472">Membrane</keyword>
<keyword id="KW-0594">Phospholipid biosynthesis</keyword>
<keyword id="KW-1208">Phospholipid metabolism</keyword>
<keyword id="KW-0808">Transferase</keyword>
<keyword id="KW-0812">Transmembrane</keyword>
<keyword id="KW-1133">Transmembrane helix</keyword>
<accession>B8EBV4</accession>
<dbReference type="EC" id="2.3.1.275" evidence="1"/>
<dbReference type="EMBL" id="CP001252">
    <property type="protein sequence ID" value="ACK47649.1"/>
    <property type="molecule type" value="Genomic_DNA"/>
</dbReference>
<dbReference type="RefSeq" id="WP_006080727.1">
    <property type="nucleotide sequence ID" value="NC_011663.1"/>
</dbReference>
<dbReference type="SMR" id="B8EBV4"/>
<dbReference type="GeneID" id="11771502"/>
<dbReference type="KEGG" id="sbp:Sbal223_3164"/>
<dbReference type="HOGENOM" id="CLU_081254_0_2_6"/>
<dbReference type="UniPathway" id="UPA00085"/>
<dbReference type="Proteomes" id="UP000002507">
    <property type="component" value="Chromosome"/>
</dbReference>
<dbReference type="GO" id="GO:0005886">
    <property type="term" value="C:plasma membrane"/>
    <property type="evidence" value="ECO:0007669"/>
    <property type="project" value="UniProtKB-SubCell"/>
</dbReference>
<dbReference type="GO" id="GO:0043772">
    <property type="term" value="F:acyl-phosphate glycerol-3-phosphate acyltransferase activity"/>
    <property type="evidence" value="ECO:0007669"/>
    <property type="project" value="UniProtKB-UniRule"/>
</dbReference>
<dbReference type="GO" id="GO:0008654">
    <property type="term" value="P:phospholipid biosynthetic process"/>
    <property type="evidence" value="ECO:0007669"/>
    <property type="project" value="UniProtKB-UniRule"/>
</dbReference>
<dbReference type="HAMAP" id="MF_01043">
    <property type="entry name" value="PlsY"/>
    <property type="match status" value="1"/>
</dbReference>
<dbReference type="InterPro" id="IPR003811">
    <property type="entry name" value="G3P_acylTferase_PlsY"/>
</dbReference>
<dbReference type="NCBIfam" id="TIGR00023">
    <property type="entry name" value="glycerol-3-phosphate 1-O-acyltransferase PlsY"/>
    <property type="match status" value="1"/>
</dbReference>
<dbReference type="PANTHER" id="PTHR30309:SF0">
    <property type="entry name" value="GLYCEROL-3-PHOSPHATE ACYLTRANSFERASE-RELATED"/>
    <property type="match status" value="1"/>
</dbReference>
<dbReference type="PANTHER" id="PTHR30309">
    <property type="entry name" value="INNER MEMBRANE PROTEIN YGIH"/>
    <property type="match status" value="1"/>
</dbReference>
<dbReference type="Pfam" id="PF02660">
    <property type="entry name" value="G3P_acyltransf"/>
    <property type="match status" value="1"/>
</dbReference>
<dbReference type="SMART" id="SM01207">
    <property type="entry name" value="G3P_acyltransf"/>
    <property type="match status" value="1"/>
</dbReference>
<organism>
    <name type="scientific">Shewanella baltica (strain OS223)</name>
    <dbReference type="NCBI Taxonomy" id="407976"/>
    <lineage>
        <taxon>Bacteria</taxon>
        <taxon>Pseudomonadati</taxon>
        <taxon>Pseudomonadota</taxon>
        <taxon>Gammaproteobacteria</taxon>
        <taxon>Alteromonadales</taxon>
        <taxon>Shewanellaceae</taxon>
        <taxon>Shewanella</taxon>
    </lineage>
</organism>